<organism>
    <name type="scientific">Shewanella sp. (strain W3-18-1)</name>
    <dbReference type="NCBI Taxonomy" id="351745"/>
    <lineage>
        <taxon>Bacteria</taxon>
        <taxon>Pseudomonadati</taxon>
        <taxon>Pseudomonadota</taxon>
        <taxon>Gammaproteobacteria</taxon>
        <taxon>Alteromonadales</taxon>
        <taxon>Shewanellaceae</taxon>
        <taxon>Shewanella</taxon>
    </lineage>
</organism>
<proteinExistence type="inferred from homology"/>
<evidence type="ECO:0000255" key="1">
    <source>
        <dbReference type="HAMAP-Rule" id="MF_00592"/>
    </source>
</evidence>
<gene>
    <name evidence="1" type="primary">deoC</name>
    <name type="ordered locus">Sputw3181_1189</name>
</gene>
<reference key="1">
    <citation type="submission" date="2006-12" db="EMBL/GenBank/DDBJ databases">
        <title>Complete sequence of Shewanella sp. W3-18-1.</title>
        <authorList>
            <consortium name="US DOE Joint Genome Institute"/>
            <person name="Copeland A."/>
            <person name="Lucas S."/>
            <person name="Lapidus A."/>
            <person name="Barry K."/>
            <person name="Detter J.C."/>
            <person name="Glavina del Rio T."/>
            <person name="Hammon N."/>
            <person name="Israni S."/>
            <person name="Dalin E."/>
            <person name="Tice H."/>
            <person name="Pitluck S."/>
            <person name="Chain P."/>
            <person name="Malfatti S."/>
            <person name="Shin M."/>
            <person name="Vergez L."/>
            <person name="Schmutz J."/>
            <person name="Larimer F."/>
            <person name="Land M."/>
            <person name="Hauser L."/>
            <person name="Kyrpides N."/>
            <person name="Lykidis A."/>
            <person name="Tiedje J."/>
            <person name="Richardson P."/>
        </authorList>
    </citation>
    <scope>NUCLEOTIDE SEQUENCE [LARGE SCALE GENOMIC DNA]</scope>
    <source>
        <strain>W3-18-1</strain>
    </source>
</reference>
<keyword id="KW-0963">Cytoplasm</keyword>
<keyword id="KW-0456">Lyase</keyword>
<keyword id="KW-0704">Schiff base</keyword>
<comment type="function">
    <text evidence="1">Catalyzes a reversible aldol reaction between acetaldehyde and D-glyceraldehyde 3-phosphate to generate 2-deoxy-D-ribose 5-phosphate.</text>
</comment>
<comment type="catalytic activity">
    <reaction evidence="1">
        <text>2-deoxy-D-ribose 5-phosphate = D-glyceraldehyde 3-phosphate + acetaldehyde</text>
        <dbReference type="Rhea" id="RHEA:12821"/>
        <dbReference type="ChEBI" id="CHEBI:15343"/>
        <dbReference type="ChEBI" id="CHEBI:59776"/>
        <dbReference type="ChEBI" id="CHEBI:62877"/>
        <dbReference type="EC" id="4.1.2.4"/>
    </reaction>
</comment>
<comment type="pathway">
    <text evidence="1">Carbohydrate degradation; 2-deoxy-D-ribose 1-phosphate degradation; D-glyceraldehyde 3-phosphate and acetaldehyde from 2-deoxy-alpha-D-ribose 1-phosphate: step 2/2.</text>
</comment>
<comment type="subcellular location">
    <subcellularLocation>
        <location evidence="1">Cytoplasm</location>
    </subcellularLocation>
</comment>
<comment type="similarity">
    <text evidence="1">Belongs to the DeoC/FbaB aldolase family. DeoC type 2 subfamily.</text>
</comment>
<sequence>MTDLKKAAQRAIELMDLTTLNDDDTDQKVIDLCHKAKTPAGNTAAICIYPRFIPIARKTLDEIGAEDIQIATVTNFPHGNDDIAIAVLETRAAVAYGADEVDVVFPYRALMEGNETVGFELVKACKEACGEVLLKVIIESGVLADPALIRRASELSIDAGADFIKTSTGKVPVNATLEAAEIMLTVISEKNTQVGFKPAGGVRDAAQAAEFLGVAERILGADWVSPRTFRFGASSLLNSLLHTLELADAPKPTQGY</sequence>
<accession>A1RH87</accession>
<name>DEOC_SHESW</name>
<protein>
    <recommendedName>
        <fullName evidence="1">Deoxyribose-phosphate aldolase</fullName>
        <shortName evidence="1">DERA</shortName>
        <ecNumber evidence="1">4.1.2.4</ecNumber>
    </recommendedName>
    <alternativeName>
        <fullName evidence="1">2-deoxy-D-ribose 5-phosphate aldolase</fullName>
    </alternativeName>
    <alternativeName>
        <fullName evidence="1">Phosphodeoxyriboaldolase</fullName>
        <shortName evidence="1">Deoxyriboaldolase</shortName>
    </alternativeName>
</protein>
<dbReference type="EC" id="4.1.2.4" evidence="1"/>
<dbReference type="EMBL" id="CP000503">
    <property type="protein sequence ID" value="ABM24032.1"/>
    <property type="molecule type" value="Genomic_DNA"/>
</dbReference>
<dbReference type="RefSeq" id="WP_011788540.1">
    <property type="nucleotide sequence ID" value="NC_008750.1"/>
</dbReference>
<dbReference type="SMR" id="A1RH87"/>
<dbReference type="KEGG" id="shw:Sputw3181_1189"/>
<dbReference type="HOGENOM" id="CLU_053595_3_1_6"/>
<dbReference type="UniPathway" id="UPA00002">
    <property type="reaction ID" value="UER00468"/>
</dbReference>
<dbReference type="Proteomes" id="UP000002597">
    <property type="component" value="Chromosome"/>
</dbReference>
<dbReference type="GO" id="GO:0005737">
    <property type="term" value="C:cytoplasm"/>
    <property type="evidence" value="ECO:0007669"/>
    <property type="project" value="UniProtKB-SubCell"/>
</dbReference>
<dbReference type="GO" id="GO:0004139">
    <property type="term" value="F:deoxyribose-phosphate aldolase activity"/>
    <property type="evidence" value="ECO:0007669"/>
    <property type="project" value="UniProtKB-UniRule"/>
</dbReference>
<dbReference type="GO" id="GO:0006018">
    <property type="term" value="P:2-deoxyribose 1-phosphate catabolic process"/>
    <property type="evidence" value="ECO:0007669"/>
    <property type="project" value="UniProtKB-UniRule"/>
</dbReference>
<dbReference type="GO" id="GO:0016052">
    <property type="term" value="P:carbohydrate catabolic process"/>
    <property type="evidence" value="ECO:0007669"/>
    <property type="project" value="TreeGrafter"/>
</dbReference>
<dbReference type="GO" id="GO:0009264">
    <property type="term" value="P:deoxyribonucleotide catabolic process"/>
    <property type="evidence" value="ECO:0007669"/>
    <property type="project" value="InterPro"/>
</dbReference>
<dbReference type="CDD" id="cd00959">
    <property type="entry name" value="DeoC"/>
    <property type="match status" value="1"/>
</dbReference>
<dbReference type="FunFam" id="3.20.20.70:FF:000034">
    <property type="entry name" value="Deoxyribose-phosphate aldolase"/>
    <property type="match status" value="1"/>
</dbReference>
<dbReference type="Gene3D" id="3.20.20.70">
    <property type="entry name" value="Aldolase class I"/>
    <property type="match status" value="1"/>
</dbReference>
<dbReference type="HAMAP" id="MF_00592">
    <property type="entry name" value="DeoC_type2"/>
    <property type="match status" value="1"/>
</dbReference>
<dbReference type="InterPro" id="IPR013785">
    <property type="entry name" value="Aldolase_TIM"/>
</dbReference>
<dbReference type="InterPro" id="IPR011343">
    <property type="entry name" value="DeoC"/>
</dbReference>
<dbReference type="InterPro" id="IPR002915">
    <property type="entry name" value="DeoC/FbaB/LacD_aldolase"/>
</dbReference>
<dbReference type="InterPro" id="IPR023649">
    <property type="entry name" value="DeoC_typeII"/>
</dbReference>
<dbReference type="NCBIfam" id="TIGR00126">
    <property type="entry name" value="deoC"/>
    <property type="match status" value="1"/>
</dbReference>
<dbReference type="PANTHER" id="PTHR10889">
    <property type="entry name" value="DEOXYRIBOSE-PHOSPHATE ALDOLASE"/>
    <property type="match status" value="1"/>
</dbReference>
<dbReference type="PANTHER" id="PTHR10889:SF3">
    <property type="entry name" value="DEOXYRIBOSE-PHOSPHATE ALDOLASE"/>
    <property type="match status" value="1"/>
</dbReference>
<dbReference type="Pfam" id="PF01791">
    <property type="entry name" value="DeoC"/>
    <property type="match status" value="1"/>
</dbReference>
<dbReference type="PIRSF" id="PIRSF001357">
    <property type="entry name" value="DeoC"/>
    <property type="match status" value="1"/>
</dbReference>
<dbReference type="SMART" id="SM01133">
    <property type="entry name" value="DeoC"/>
    <property type="match status" value="1"/>
</dbReference>
<dbReference type="SUPFAM" id="SSF51569">
    <property type="entry name" value="Aldolase"/>
    <property type="match status" value="1"/>
</dbReference>
<feature type="chain" id="PRO_1000072611" description="Deoxyribose-phosphate aldolase">
    <location>
        <begin position="1"/>
        <end position="256"/>
    </location>
</feature>
<feature type="active site" description="Proton donor/acceptor" evidence="1">
    <location>
        <position position="102"/>
    </location>
</feature>
<feature type="active site" description="Schiff-base intermediate with acetaldehyde" evidence="1">
    <location>
        <position position="165"/>
    </location>
</feature>
<feature type="active site" description="Proton donor/acceptor" evidence="1">
    <location>
        <position position="197"/>
    </location>
</feature>